<evidence type="ECO:0000269" key="1">
    <source>
    </source>
</evidence>
<evidence type="ECO:0000305" key="2"/>
<proteinExistence type="evidence at protein level"/>
<name>ARRB_CALVI</name>
<comment type="function">
    <text>Directly interacts with light-activated rhodopsin thereby activating the phosphorylation of metarhodopsin. Inhibits the dephosphorylation of metarhodopsin.</text>
</comment>
<comment type="similarity">
    <text evidence="2">Belongs to the arrestin family.</text>
</comment>
<feature type="initiator methionine" description="Removed" evidence="1">
    <location>
        <position position="1"/>
    </location>
</feature>
<feature type="chain" id="PRO_0000205216" description="Phosrestin-1">
    <location>
        <begin position="2"/>
        <end position="401"/>
    </location>
</feature>
<reference key="1">
    <citation type="journal article" date="1994" name="J. Biol. Chem.">
        <title>Mechanism of arrestin 2 function in rhabdomeric photoreceptors.</title>
        <authorList>
            <person name="Plangger A."/>
            <person name="Malicki D."/>
            <person name="Whitney M."/>
            <person name="Paulsen R."/>
        </authorList>
    </citation>
    <scope>NUCLEOTIDE SEQUENCE [MRNA]</scope>
    <scope>PROTEIN SEQUENCE OF 2-11</scope>
    <source>
        <tissue>Retina</tissue>
    </source>
</reference>
<gene>
    <name type="primary">ARR2</name>
</gene>
<organism>
    <name type="scientific">Calliphora vicina</name>
    <name type="common">Blue blowfly</name>
    <name type="synonym">Calliphora erythrocephala</name>
    <dbReference type="NCBI Taxonomy" id="7373"/>
    <lineage>
        <taxon>Eukaryota</taxon>
        <taxon>Metazoa</taxon>
        <taxon>Ecdysozoa</taxon>
        <taxon>Arthropoda</taxon>
        <taxon>Hexapoda</taxon>
        <taxon>Insecta</taxon>
        <taxon>Pterygota</taxon>
        <taxon>Neoptera</taxon>
        <taxon>Endopterygota</taxon>
        <taxon>Diptera</taxon>
        <taxon>Brachycera</taxon>
        <taxon>Muscomorpha</taxon>
        <taxon>Oestroidea</taxon>
        <taxon>Calliphoridae</taxon>
        <taxon>Calliphorinae</taxon>
        <taxon>Calliphora</taxon>
    </lineage>
</organism>
<dbReference type="EMBL" id="X79073">
    <property type="protein sequence ID" value="CAA55673.1"/>
    <property type="molecule type" value="mRNA"/>
</dbReference>
<dbReference type="PIR" id="B55081">
    <property type="entry name" value="B55081"/>
</dbReference>
<dbReference type="SMR" id="P51487"/>
<dbReference type="GO" id="GO:0005737">
    <property type="term" value="C:cytoplasm"/>
    <property type="evidence" value="ECO:0007669"/>
    <property type="project" value="TreeGrafter"/>
</dbReference>
<dbReference type="GO" id="GO:0001664">
    <property type="term" value="F:G protein-coupled receptor binding"/>
    <property type="evidence" value="ECO:0007669"/>
    <property type="project" value="TreeGrafter"/>
</dbReference>
<dbReference type="GO" id="GO:0002031">
    <property type="term" value="P:G protein-coupled receptor internalization"/>
    <property type="evidence" value="ECO:0007669"/>
    <property type="project" value="TreeGrafter"/>
</dbReference>
<dbReference type="GO" id="GO:0007165">
    <property type="term" value="P:signal transduction"/>
    <property type="evidence" value="ECO:0007669"/>
    <property type="project" value="InterPro"/>
</dbReference>
<dbReference type="GO" id="GO:0007601">
    <property type="term" value="P:visual perception"/>
    <property type="evidence" value="ECO:0007669"/>
    <property type="project" value="UniProtKB-KW"/>
</dbReference>
<dbReference type="FunFam" id="2.60.40.840:FF:000002">
    <property type="entry name" value="Arrestin 3"/>
    <property type="match status" value="1"/>
</dbReference>
<dbReference type="FunFam" id="2.60.40.640:FF:000020">
    <property type="entry name" value="Arrestin, Arr2"/>
    <property type="match status" value="1"/>
</dbReference>
<dbReference type="Gene3D" id="2.60.40.640">
    <property type="match status" value="1"/>
</dbReference>
<dbReference type="Gene3D" id="2.60.40.840">
    <property type="match status" value="1"/>
</dbReference>
<dbReference type="InterPro" id="IPR000698">
    <property type="entry name" value="Arrestin"/>
</dbReference>
<dbReference type="InterPro" id="IPR014752">
    <property type="entry name" value="Arrestin-like_C"/>
</dbReference>
<dbReference type="InterPro" id="IPR011021">
    <property type="entry name" value="Arrestin-like_N"/>
</dbReference>
<dbReference type="InterPro" id="IPR011022">
    <property type="entry name" value="Arrestin_C-like"/>
</dbReference>
<dbReference type="InterPro" id="IPR017864">
    <property type="entry name" value="Arrestin_CS"/>
</dbReference>
<dbReference type="InterPro" id="IPR014753">
    <property type="entry name" value="Arrestin_N"/>
</dbReference>
<dbReference type="InterPro" id="IPR014756">
    <property type="entry name" value="Ig_E-set"/>
</dbReference>
<dbReference type="PANTHER" id="PTHR11792">
    <property type="entry name" value="ARRESTIN"/>
    <property type="match status" value="1"/>
</dbReference>
<dbReference type="PANTHER" id="PTHR11792:SF23">
    <property type="entry name" value="PHOSRESTIN-1"/>
    <property type="match status" value="1"/>
</dbReference>
<dbReference type="Pfam" id="PF02752">
    <property type="entry name" value="Arrestin_C"/>
    <property type="match status" value="1"/>
</dbReference>
<dbReference type="Pfam" id="PF00339">
    <property type="entry name" value="Arrestin_N"/>
    <property type="match status" value="1"/>
</dbReference>
<dbReference type="PRINTS" id="PR00309">
    <property type="entry name" value="ARRESTIN"/>
</dbReference>
<dbReference type="SMART" id="SM01017">
    <property type="entry name" value="Arrestin_C"/>
    <property type="match status" value="1"/>
</dbReference>
<dbReference type="SUPFAM" id="SSF81296">
    <property type="entry name" value="E set domains"/>
    <property type="match status" value="2"/>
</dbReference>
<dbReference type="PROSITE" id="PS00295">
    <property type="entry name" value="ARRESTINS"/>
    <property type="match status" value="1"/>
</dbReference>
<sequence>MVVSVKVFKKATPNGKVTFYLGRRHFIDHFDYIDPVDGVIVVDPDYLKNRKVFAQLATIYRYGREEDEVMGVKFSKELILCREQIVPMGNSNMEMTPTQEKLVRKLGSNAHPFTFHFPPNSPSSVTLQQEGDDLGKPLGVEYTIRAYVADSEDDRQHKRSMVSLVIKKLQYAPPTRGQRLPSSLVSKGFTFSNGKISLEVTLDREIYYHGGKVAATVQINNNSKKAVKNIKVFIIQHTEITMVNAQFSKHVAQLETKEGCPITPGANLSKTFYLIPLASNNKDRHGIALDGHLKDEDVNLASSTMVQDGKSTGDACGIVISYSVRIKLNCGTLGGEIQTDVPFKLLQPAPGSVEKKRSNAMKKMKSIEQHRNTKGYYQDDDDNIVFEDFAKMRNNNADVMD</sequence>
<protein>
    <recommendedName>
        <fullName>Phosrestin-1</fullName>
    </recommendedName>
    <alternativeName>
        <fullName>Arrestin-2</fullName>
    </alternativeName>
    <alternativeName>
        <fullName>Arrestin-B</fullName>
    </alternativeName>
    <alternativeName>
        <fullName>Phosrestin I</fullName>
    </alternativeName>
</protein>
<keyword id="KW-0903">Direct protein sequencing</keyword>
<keyword id="KW-0597">Phosphoprotein</keyword>
<keyword id="KW-0716">Sensory transduction</keyword>
<keyword id="KW-0844">Vision</keyword>
<accession>P51487</accession>